<dbReference type="EC" id="2.7.2.3"/>
<dbReference type="EMBL" id="AJ248286">
    <property type="protein sequence ID" value="CAB49946.1"/>
    <property type="molecule type" value="Genomic_DNA"/>
</dbReference>
<dbReference type="EMBL" id="HE613800">
    <property type="protein sequence ID" value="CCE70445.1"/>
    <property type="molecule type" value="Genomic_DNA"/>
</dbReference>
<dbReference type="PIR" id="E75080">
    <property type="entry name" value="E75080"/>
</dbReference>
<dbReference type="RefSeq" id="WP_010868153.1">
    <property type="nucleotide sequence ID" value="NC_000868.1"/>
</dbReference>
<dbReference type="SMR" id="Q9UZW0"/>
<dbReference type="STRING" id="272844.PAB1679"/>
<dbReference type="KEGG" id="pab:PAB1679"/>
<dbReference type="PATRIC" id="fig|272844.11.peg.1088"/>
<dbReference type="eggNOG" id="arCOG00496">
    <property type="taxonomic scope" value="Archaea"/>
</dbReference>
<dbReference type="HOGENOM" id="CLU_025427_0_2_2"/>
<dbReference type="OrthoDB" id="6575at2157"/>
<dbReference type="PhylomeDB" id="Q9UZW0"/>
<dbReference type="UniPathway" id="UPA00109">
    <property type="reaction ID" value="UER00185"/>
</dbReference>
<dbReference type="Proteomes" id="UP000000810">
    <property type="component" value="Chromosome"/>
</dbReference>
<dbReference type="Proteomes" id="UP000009139">
    <property type="component" value="Chromosome"/>
</dbReference>
<dbReference type="GO" id="GO:0005829">
    <property type="term" value="C:cytosol"/>
    <property type="evidence" value="ECO:0007669"/>
    <property type="project" value="TreeGrafter"/>
</dbReference>
<dbReference type="GO" id="GO:0043531">
    <property type="term" value="F:ADP binding"/>
    <property type="evidence" value="ECO:0007669"/>
    <property type="project" value="TreeGrafter"/>
</dbReference>
<dbReference type="GO" id="GO:0005524">
    <property type="term" value="F:ATP binding"/>
    <property type="evidence" value="ECO:0007669"/>
    <property type="project" value="UniProtKB-KW"/>
</dbReference>
<dbReference type="GO" id="GO:0004618">
    <property type="term" value="F:phosphoglycerate kinase activity"/>
    <property type="evidence" value="ECO:0007669"/>
    <property type="project" value="UniProtKB-UniRule"/>
</dbReference>
<dbReference type="GO" id="GO:0006094">
    <property type="term" value="P:gluconeogenesis"/>
    <property type="evidence" value="ECO:0007669"/>
    <property type="project" value="TreeGrafter"/>
</dbReference>
<dbReference type="GO" id="GO:0006096">
    <property type="term" value="P:glycolytic process"/>
    <property type="evidence" value="ECO:0007669"/>
    <property type="project" value="UniProtKB-UniRule"/>
</dbReference>
<dbReference type="FunFam" id="3.40.50.1260:FF:000006">
    <property type="entry name" value="Phosphoglycerate kinase"/>
    <property type="match status" value="1"/>
</dbReference>
<dbReference type="FunFam" id="3.40.50.1260:FF:000012">
    <property type="entry name" value="Phosphoglycerate kinase"/>
    <property type="match status" value="1"/>
</dbReference>
<dbReference type="Gene3D" id="3.40.50.1260">
    <property type="entry name" value="Phosphoglycerate kinase, N-terminal domain"/>
    <property type="match status" value="2"/>
</dbReference>
<dbReference type="HAMAP" id="MF_00145">
    <property type="entry name" value="Phosphoglyc_kinase"/>
    <property type="match status" value="1"/>
</dbReference>
<dbReference type="InterPro" id="IPR001576">
    <property type="entry name" value="Phosphoglycerate_kinase"/>
</dbReference>
<dbReference type="InterPro" id="IPR015911">
    <property type="entry name" value="Phosphoglycerate_kinase_CS"/>
</dbReference>
<dbReference type="InterPro" id="IPR015824">
    <property type="entry name" value="Phosphoglycerate_kinase_N"/>
</dbReference>
<dbReference type="InterPro" id="IPR036043">
    <property type="entry name" value="Phosphoglycerate_kinase_sf"/>
</dbReference>
<dbReference type="PANTHER" id="PTHR11406">
    <property type="entry name" value="PHOSPHOGLYCERATE KINASE"/>
    <property type="match status" value="1"/>
</dbReference>
<dbReference type="PANTHER" id="PTHR11406:SF23">
    <property type="entry name" value="PHOSPHOGLYCERATE KINASE 1, CHLOROPLASTIC-RELATED"/>
    <property type="match status" value="1"/>
</dbReference>
<dbReference type="Pfam" id="PF00162">
    <property type="entry name" value="PGK"/>
    <property type="match status" value="1"/>
</dbReference>
<dbReference type="PIRSF" id="PIRSF000724">
    <property type="entry name" value="Pgk"/>
    <property type="match status" value="1"/>
</dbReference>
<dbReference type="PRINTS" id="PR00477">
    <property type="entry name" value="PHGLYCKINASE"/>
</dbReference>
<dbReference type="SUPFAM" id="SSF53748">
    <property type="entry name" value="Phosphoglycerate kinase"/>
    <property type="match status" value="1"/>
</dbReference>
<dbReference type="PROSITE" id="PS00111">
    <property type="entry name" value="PGLYCERATE_KINASE"/>
    <property type="match status" value="1"/>
</dbReference>
<protein>
    <recommendedName>
        <fullName>Phosphoglycerate kinase</fullName>
        <ecNumber>2.7.2.3</ecNumber>
    </recommendedName>
</protein>
<evidence type="ECO:0000250" key="1"/>
<evidence type="ECO:0000305" key="2"/>
<comment type="catalytic activity">
    <reaction>
        <text>(2R)-3-phosphoglycerate + ATP = (2R)-3-phospho-glyceroyl phosphate + ADP</text>
        <dbReference type="Rhea" id="RHEA:14801"/>
        <dbReference type="ChEBI" id="CHEBI:30616"/>
        <dbReference type="ChEBI" id="CHEBI:57604"/>
        <dbReference type="ChEBI" id="CHEBI:58272"/>
        <dbReference type="ChEBI" id="CHEBI:456216"/>
        <dbReference type="EC" id="2.7.2.3"/>
    </reaction>
</comment>
<comment type="pathway">
    <text>Carbohydrate degradation; glycolysis; pyruvate from D-glyceraldehyde 3-phosphate: step 2/5.</text>
</comment>
<comment type="subunit">
    <text evidence="1">Homodimer.</text>
</comment>
<comment type="subcellular location">
    <subcellularLocation>
        <location evidence="2">Cytoplasm</location>
    </subcellularLocation>
</comment>
<comment type="similarity">
    <text evidence="2">Belongs to the phosphoglycerate kinase family.</text>
</comment>
<reference key="1">
    <citation type="journal article" date="2003" name="Mol. Microbiol.">
        <title>An integrated analysis of the genome of the hyperthermophilic archaeon Pyrococcus abyssi.</title>
        <authorList>
            <person name="Cohen G.N."/>
            <person name="Barbe V."/>
            <person name="Flament D."/>
            <person name="Galperin M."/>
            <person name="Heilig R."/>
            <person name="Lecompte O."/>
            <person name="Poch O."/>
            <person name="Prieur D."/>
            <person name="Querellou J."/>
            <person name="Ripp R."/>
            <person name="Thierry J.-C."/>
            <person name="Van der Oost J."/>
            <person name="Weissenbach J."/>
            <person name="Zivanovic Y."/>
            <person name="Forterre P."/>
        </authorList>
    </citation>
    <scope>NUCLEOTIDE SEQUENCE [LARGE SCALE GENOMIC DNA]</scope>
    <source>
        <strain>GE5 / Orsay</strain>
    </source>
</reference>
<reference key="2">
    <citation type="journal article" date="2012" name="Curr. Microbiol.">
        <title>Re-annotation of two hyperthermophilic archaea Pyrococcus abyssi GE5 and Pyrococcus furiosus DSM 3638.</title>
        <authorList>
            <person name="Gao J."/>
            <person name="Wang J."/>
        </authorList>
    </citation>
    <scope>GENOME REANNOTATION</scope>
    <source>
        <strain>GE5 / Orsay</strain>
    </source>
</reference>
<gene>
    <name type="primary">pgk</name>
    <name type="ordered locus">PYRAB10360</name>
    <name type="ORF">PAB1679</name>
</gene>
<feature type="chain" id="PRO_0000146064" description="Phosphoglycerate kinase">
    <location>
        <begin position="1"/>
        <end position="410"/>
    </location>
</feature>
<feature type="binding site" evidence="1">
    <location>
        <begin position="19"/>
        <end position="21"/>
    </location>
    <ligand>
        <name>substrate</name>
    </ligand>
</feature>
<feature type="binding site" evidence="1">
    <location>
        <position position="34"/>
    </location>
    <ligand>
        <name>substrate</name>
    </ligand>
</feature>
<feature type="binding site" evidence="1">
    <location>
        <begin position="57"/>
        <end position="60"/>
    </location>
    <ligand>
        <name>substrate</name>
    </ligand>
</feature>
<feature type="binding site" evidence="1">
    <location>
        <position position="114"/>
    </location>
    <ligand>
        <name>substrate</name>
    </ligand>
</feature>
<feature type="binding site" evidence="1">
    <location>
        <position position="154"/>
    </location>
    <ligand>
        <name>substrate</name>
    </ligand>
</feature>
<feature type="binding site" evidence="1">
    <location>
        <position position="332"/>
    </location>
    <ligand>
        <name>ATP</name>
        <dbReference type="ChEBI" id="CHEBI:30616"/>
    </ligand>
</feature>
<feature type="binding site" evidence="1">
    <location>
        <begin position="358"/>
        <end position="361"/>
    </location>
    <ligand>
        <name>ATP</name>
        <dbReference type="ChEBI" id="CHEBI:30616"/>
    </ligand>
</feature>
<proteinExistence type="inferred from homology"/>
<name>PGK_PYRAB</name>
<accession>Q9UZW0</accession>
<accession>G8ZJI6</accession>
<sequence>MFRLGDFNYHNKVVFLRVDLNSPMKDGKIISDARFRAVLPTIKYLLENGARVVVGTHQGKPYSEDYATTEEHARILSNLLNQHVEYVEDIFGRYAREKIQELKPGEIAMLENLRFSAEEVKNKPIEECEKTFFVKKLSKVIDYVVNDAFAAAHRSQPSLVGFARIKPMIMGFLMEREIEALMKAYYSKESPRVYVLGGAKVDDSLKVAENVLRRGFADVILTGGLVANVFTLAKGFDLGRKNIEFMKKKGLLELVKHAEKILDEFYPYVRTPVDFAIDYKGDREEIYLLSEKRELLNDYQIMDIGSRTIEKYRDIIMKAKVVVANGPMGVFEREEFALGTVEVFKAIAESEAFSVLGGGHSIASIQKYGIEGITHISTGGGAMLTFFAGEELPVLRALQISYEKFKEVKA</sequence>
<organism>
    <name type="scientific">Pyrococcus abyssi (strain GE5 / Orsay)</name>
    <dbReference type="NCBI Taxonomy" id="272844"/>
    <lineage>
        <taxon>Archaea</taxon>
        <taxon>Methanobacteriati</taxon>
        <taxon>Methanobacteriota</taxon>
        <taxon>Thermococci</taxon>
        <taxon>Thermococcales</taxon>
        <taxon>Thermococcaceae</taxon>
        <taxon>Pyrococcus</taxon>
    </lineage>
</organism>
<keyword id="KW-0067">ATP-binding</keyword>
<keyword id="KW-0963">Cytoplasm</keyword>
<keyword id="KW-0324">Glycolysis</keyword>
<keyword id="KW-0418">Kinase</keyword>
<keyword id="KW-0547">Nucleotide-binding</keyword>
<keyword id="KW-0808">Transferase</keyword>